<sequence length="242" mass="26707">MKKIIIGNWKMNKTVSETRDFIQKFDIFYQENVGKIKEDLDFAIAPSFISLSLISKSLTKKLEIAAQNLSQFDSGAFTGEISGKMLQDLGTKYVIIGHSERREIFKEKDEELKNKILQAQKYDLIPVFCVGESLLEFEAGLTKKVIISQINAIKSVLNFQKAIIAYEPIWAIGTGKTATAAIAEKVCGLIKENFGKNTMVIYGGSVNSKNINELVSQKSIDGALVGGASLDPEEFGKILVNS</sequence>
<accession>P0C0J6</accession>
<accession>P50920</accession>
<accession>Q601C5</accession>
<protein>
    <recommendedName>
        <fullName evidence="1">Triosephosphate isomerase</fullName>
        <shortName evidence="1">TIM</shortName>
        <shortName evidence="1">TPI</shortName>
        <ecNumber evidence="1">5.3.1.1</ecNumber>
    </recommendedName>
    <alternativeName>
        <fullName evidence="1">Triose-phosphate isomerase</fullName>
    </alternativeName>
</protein>
<name>TPIS_MESH2</name>
<keyword id="KW-0963">Cytoplasm</keyword>
<keyword id="KW-0312">Gluconeogenesis</keyword>
<keyword id="KW-0324">Glycolysis</keyword>
<keyword id="KW-0413">Isomerase</keyword>
<evidence type="ECO:0000255" key="1">
    <source>
        <dbReference type="HAMAP-Rule" id="MF_00147"/>
    </source>
</evidence>
<organism>
    <name type="scientific">Mesomycoplasma hyopneumoniae (strain 232)</name>
    <name type="common">Mycoplasma hyopneumoniae</name>
    <dbReference type="NCBI Taxonomy" id="295358"/>
    <lineage>
        <taxon>Bacteria</taxon>
        <taxon>Bacillati</taxon>
        <taxon>Mycoplasmatota</taxon>
        <taxon>Mycoplasmoidales</taxon>
        <taxon>Metamycoplasmataceae</taxon>
        <taxon>Mesomycoplasma</taxon>
    </lineage>
</organism>
<proteinExistence type="inferred from homology"/>
<dbReference type="EC" id="5.3.1.1" evidence="1"/>
<dbReference type="EMBL" id="AE017332">
    <property type="protein sequence ID" value="AAV27802.1"/>
    <property type="molecule type" value="Genomic_DNA"/>
</dbReference>
<dbReference type="RefSeq" id="WP_011206114.1">
    <property type="nucleotide sequence ID" value="NC_006360.1"/>
</dbReference>
<dbReference type="SMR" id="P0C0J6"/>
<dbReference type="GeneID" id="41334400"/>
<dbReference type="KEGG" id="mhy:mhp277"/>
<dbReference type="eggNOG" id="COG0149">
    <property type="taxonomic scope" value="Bacteria"/>
</dbReference>
<dbReference type="HOGENOM" id="CLU_024251_2_3_14"/>
<dbReference type="PhylomeDB" id="P0C0J6"/>
<dbReference type="UniPathway" id="UPA00109">
    <property type="reaction ID" value="UER00189"/>
</dbReference>
<dbReference type="UniPathway" id="UPA00138"/>
<dbReference type="Proteomes" id="UP000006822">
    <property type="component" value="Chromosome"/>
</dbReference>
<dbReference type="GO" id="GO:0005829">
    <property type="term" value="C:cytosol"/>
    <property type="evidence" value="ECO:0007669"/>
    <property type="project" value="TreeGrafter"/>
</dbReference>
<dbReference type="GO" id="GO:0004807">
    <property type="term" value="F:triose-phosphate isomerase activity"/>
    <property type="evidence" value="ECO:0007669"/>
    <property type="project" value="UniProtKB-UniRule"/>
</dbReference>
<dbReference type="GO" id="GO:0006094">
    <property type="term" value="P:gluconeogenesis"/>
    <property type="evidence" value="ECO:0007669"/>
    <property type="project" value="UniProtKB-UniRule"/>
</dbReference>
<dbReference type="GO" id="GO:0046166">
    <property type="term" value="P:glyceraldehyde-3-phosphate biosynthetic process"/>
    <property type="evidence" value="ECO:0007669"/>
    <property type="project" value="TreeGrafter"/>
</dbReference>
<dbReference type="GO" id="GO:0019563">
    <property type="term" value="P:glycerol catabolic process"/>
    <property type="evidence" value="ECO:0007669"/>
    <property type="project" value="TreeGrafter"/>
</dbReference>
<dbReference type="GO" id="GO:0006096">
    <property type="term" value="P:glycolytic process"/>
    <property type="evidence" value="ECO:0007669"/>
    <property type="project" value="UniProtKB-UniRule"/>
</dbReference>
<dbReference type="CDD" id="cd00311">
    <property type="entry name" value="TIM"/>
    <property type="match status" value="1"/>
</dbReference>
<dbReference type="FunFam" id="3.20.20.70:FF:000016">
    <property type="entry name" value="Triosephosphate isomerase"/>
    <property type="match status" value="1"/>
</dbReference>
<dbReference type="Gene3D" id="3.20.20.70">
    <property type="entry name" value="Aldolase class I"/>
    <property type="match status" value="1"/>
</dbReference>
<dbReference type="HAMAP" id="MF_00147_B">
    <property type="entry name" value="TIM_B"/>
    <property type="match status" value="1"/>
</dbReference>
<dbReference type="InterPro" id="IPR013785">
    <property type="entry name" value="Aldolase_TIM"/>
</dbReference>
<dbReference type="InterPro" id="IPR035990">
    <property type="entry name" value="TIM_sf"/>
</dbReference>
<dbReference type="InterPro" id="IPR022896">
    <property type="entry name" value="TrioseP_Isoase_bac/euk"/>
</dbReference>
<dbReference type="InterPro" id="IPR000652">
    <property type="entry name" value="Triosephosphate_isomerase"/>
</dbReference>
<dbReference type="InterPro" id="IPR020861">
    <property type="entry name" value="Triosephosphate_isomerase_AS"/>
</dbReference>
<dbReference type="NCBIfam" id="TIGR00419">
    <property type="entry name" value="tim"/>
    <property type="match status" value="1"/>
</dbReference>
<dbReference type="PANTHER" id="PTHR21139">
    <property type="entry name" value="TRIOSEPHOSPHATE ISOMERASE"/>
    <property type="match status" value="1"/>
</dbReference>
<dbReference type="PANTHER" id="PTHR21139:SF42">
    <property type="entry name" value="TRIOSEPHOSPHATE ISOMERASE"/>
    <property type="match status" value="1"/>
</dbReference>
<dbReference type="Pfam" id="PF00121">
    <property type="entry name" value="TIM"/>
    <property type="match status" value="1"/>
</dbReference>
<dbReference type="SUPFAM" id="SSF51351">
    <property type="entry name" value="Triosephosphate isomerase (TIM)"/>
    <property type="match status" value="1"/>
</dbReference>
<dbReference type="PROSITE" id="PS00171">
    <property type="entry name" value="TIM_1"/>
    <property type="match status" value="1"/>
</dbReference>
<dbReference type="PROSITE" id="PS51440">
    <property type="entry name" value="TIM_2"/>
    <property type="match status" value="1"/>
</dbReference>
<reference key="1">
    <citation type="journal article" date="2004" name="J. Bacteriol.">
        <title>The genome sequence of Mycoplasma hyopneumoniae strain 232, the agent of swine mycoplasmosis.</title>
        <authorList>
            <person name="Minion F.C."/>
            <person name="Lefkowitz E.J."/>
            <person name="Madsen M.L."/>
            <person name="Cleary B.J."/>
            <person name="Swartzell S.M."/>
            <person name="Mahairas G.G."/>
        </authorList>
    </citation>
    <scope>NUCLEOTIDE SEQUENCE [LARGE SCALE GENOMIC DNA]</scope>
    <source>
        <strain>232</strain>
    </source>
</reference>
<feature type="chain" id="PRO_0000090250" description="Triosephosphate isomerase">
    <location>
        <begin position="1"/>
        <end position="242"/>
    </location>
</feature>
<feature type="active site" description="Electrophile" evidence="1">
    <location>
        <position position="98"/>
    </location>
</feature>
<feature type="active site" description="Proton acceptor" evidence="1">
    <location>
        <position position="167"/>
    </location>
</feature>
<feature type="binding site" evidence="1">
    <location>
        <begin position="8"/>
        <end position="10"/>
    </location>
    <ligand>
        <name>substrate</name>
    </ligand>
</feature>
<feature type="binding site" evidence="1">
    <location>
        <position position="173"/>
    </location>
    <ligand>
        <name>substrate</name>
    </ligand>
</feature>
<feature type="binding site" evidence="1">
    <location>
        <position position="205"/>
    </location>
    <ligand>
        <name>substrate</name>
    </ligand>
</feature>
<feature type="binding site" evidence="1">
    <location>
        <begin position="226"/>
        <end position="227"/>
    </location>
    <ligand>
        <name>substrate</name>
    </ligand>
</feature>
<gene>
    <name evidence="1" type="primary">tpiA</name>
    <name type="ordered locus">mhp277</name>
</gene>
<comment type="function">
    <text evidence="1">Involved in the gluconeogenesis. Catalyzes stereospecifically the conversion of dihydroxyacetone phosphate (DHAP) to D-glyceraldehyde-3-phosphate (G3P).</text>
</comment>
<comment type="catalytic activity">
    <reaction evidence="1">
        <text>D-glyceraldehyde 3-phosphate = dihydroxyacetone phosphate</text>
        <dbReference type="Rhea" id="RHEA:18585"/>
        <dbReference type="ChEBI" id="CHEBI:57642"/>
        <dbReference type="ChEBI" id="CHEBI:59776"/>
        <dbReference type="EC" id="5.3.1.1"/>
    </reaction>
</comment>
<comment type="pathway">
    <text evidence="1">Carbohydrate biosynthesis; gluconeogenesis.</text>
</comment>
<comment type="pathway">
    <text evidence="1">Carbohydrate degradation; glycolysis; D-glyceraldehyde 3-phosphate from glycerone phosphate: step 1/1.</text>
</comment>
<comment type="subunit">
    <text evidence="1">Homodimer.</text>
</comment>
<comment type="subcellular location">
    <subcellularLocation>
        <location evidence="1">Cytoplasm</location>
    </subcellularLocation>
</comment>
<comment type="similarity">
    <text evidence="1">Belongs to the triosephosphate isomerase family.</text>
</comment>